<evidence type="ECO:0000255" key="1">
    <source>
        <dbReference type="PROSITE-ProRule" id="PRU00108"/>
    </source>
</evidence>
<evidence type="ECO:0000256" key="2">
    <source>
        <dbReference type="SAM" id="MobiDB-lite"/>
    </source>
</evidence>
<name>TLX3_CHICK</name>
<gene>
    <name type="primary">TLX3</name>
    <name type="synonym">HOX11L2</name>
</gene>
<feature type="chain" id="PRO_0000049340" description="T-cell leukemia homeobox protein 3">
    <location>
        <begin position="1"/>
        <end position="297"/>
    </location>
</feature>
<feature type="DNA-binding region" description="Homeobox" evidence="1">
    <location>
        <begin position="172"/>
        <end position="231"/>
    </location>
</feature>
<feature type="region of interest" description="Disordered" evidence="2">
    <location>
        <begin position="1"/>
        <end position="68"/>
    </location>
</feature>
<feature type="compositionally biased region" description="Pro residues" evidence="2">
    <location>
        <begin position="32"/>
        <end position="52"/>
    </location>
</feature>
<accession>O93367</accession>
<comment type="function">
    <text>Seems to be involved in the development of cranial sensory innervation from peripheral ganglia.</text>
</comment>
<comment type="subcellular location">
    <subcellularLocation>
        <location evidence="1">Nucleus</location>
    </subcellularLocation>
</comment>
<comment type="tissue specificity">
    <text>Expression is restricted to neurons in the peripheral and central nervous system.</text>
</comment>
<proteinExistence type="evidence at transcript level"/>
<protein>
    <recommendedName>
        <fullName>T-cell leukemia homeobox protein 3</fullName>
    </recommendedName>
    <alternativeName>
        <fullName>Homeobox TLX-3</fullName>
    </alternativeName>
    <alternativeName>
        <fullName>Homeobox protein Hox-11L2</fullName>
    </alternativeName>
</protein>
<reference key="1">
    <citation type="journal article" date="1998" name="J. Neurosci.">
        <title>Tlx-1 and Tlx-3 homeobox gene expression in cranial sensory ganglia and hindbrain of the chick embryo: markers of patterned connectivity.</title>
        <authorList>
            <person name="Logan C.C."/>
            <person name="Wingate R.J.T."/>
            <person name="McKay I.J."/>
            <person name="Lumsden A."/>
        </authorList>
    </citation>
    <scope>NUCLEOTIDE SEQUENCE [MRNA]</scope>
    <source>
        <strain>Rhode Island red</strain>
    </source>
</reference>
<keyword id="KW-0217">Developmental protein</keyword>
<keyword id="KW-0238">DNA-binding</keyword>
<keyword id="KW-0371">Homeobox</keyword>
<keyword id="KW-0539">Nucleus</keyword>
<keyword id="KW-1185">Reference proteome</keyword>
<sequence>MEPAAGAQGPHQHEPISFGIDQILSGPEQDGAPPPPPPPPPPPPPPPPPPRGPDGAAFLGGPRGGAPYPALPGPFPAIAAPFEESGPYGVNLSLAPGGVIRVPAHRPIPGAVPPPVPSAIPAVPGLGGLSFPWMESSRRFVKERFTAAAALTPFTVTRRIGHPYQNRTPPKRKKPRTSFSRVQICELEKRFHRQKYLASAERAALAKSLKMTDAQVKTWFQNRRTKWRRQTAEEREAERQQASRLMLQLQHDAFQKSLNESIQPDPLCLHNSSLFALQNLQPWEEESAKIPPVTSLV</sequence>
<dbReference type="EMBL" id="AF071875">
    <property type="protein sequence ID" value="AAC23901.1"/>
    <property type="molecule type" value="mRNA"/>
</dbReference>
<dbReference type="RefSeq" id="NP_001392780.1">
    <property type="nucleotide sequence ID" value="NM_001405851.1"/>
</dbReference>
<dbReference type="SMR" id="O93367"/>
<dbReference type="FunCoup" id="O93367">
    <property type="interactions" value="160"/>
</dbReference>
<dbReference type="STRING" id="9031.ENSGALP00000003422"/>
<dbReference type="PaxDb" id="9031-ENSGALP00000003422"/>
<dbReference type="Ensembl" id="ENSGALT00010024944.1">
    <property type="protein sequence ID" value="ENSGALP00010014167.1"/>
    <property type="gene ID" value="ENSGALG00010010429.1"/>
</dbReference>
<dbReference type="GeneID" id="107054494"/>
<dbReference type="VEuPathDB" id="HostDB:geneid_107054494"/>
<dbReference type="eggNOG" id="KOG0488">
    <property type="taxonomic scope" value="Eukaryota"/>
</dbReference>
<dbReference type="GeneTree" id="ENSGT00940000160629"/>
<dbReference type="HOGENOM" id="CLU_053409_3_0_1"/>
<dbReference type="InParanoid" id="O93367"/>
<dbReference type="OMA" id="TPHQHEP"/>
<dbReference type="OrthoDB" id="9451579at2759"/>
<dbReference type="PhylomeDB" id="O93367"/>
<dbReference type="PRO" id="PR:O93367"/>
<dbReference type="Proteomes" id="UP000000539">
    <property type="component" value="Chromosome 13"/>
</dbReference>
<dbReference type="GO" id="GO:0005654">
    <property type="term" value="C:nucleoplasm"/>
    <property type="evidence" value="ECO:0007669"/>
    <property type="project" value="Ensembl"/>
</dbReference>
<dbReference type="GO" id="GO:0005634">
    <property type="term" value="C:nucleus"/>
    <property type="evidence" value="ECO:0000318"/>
    <property type="project" value="GO_Central"/>
</dbReference>
<dbReference type="GO" id="GO:0000981">
    <property type="term" value="F:DNA-binding transcription factor activity, RNA polymerase II-specific"/>
    <property type="evidence" value="ECO:0000318"/>
    <property type="project" value="GO_Central"/>
</dbReference>
<dbReference type="GO" id="GO:1990837">
    <property type="term" value="F:sequence-specific double-stranded DNA binding"/>
    <property type="evidence" value="ECO:0007669"/>
    <property type="project" value="Ensembl"/>
</dbReference>
<dbReference type="GO" id="GO:0048513">
    <property type="term" value="P:animal organ development"/>
    <property type="evidence" value="ECO:0000318"/>
    <property type="project" value="GO_Central"/>
</dbReference>
<dbReference type="GO" id="GO:0007417">
    <property type="term" value="P:central nervous system development"/>
    <property type="evidence" value="ECO:0007669"/>
    <property type="project" value="Ensembl"/>
</dbReference>
<dbReference type="GO" id="GO:0097154">
    <property type="term" value="P:GABAergic neuron differentiation"/>
    <property type="evidence" value="ECO:0007669"/>
    <property type="project" value="Ensembl"/>
</dbReference>
<dbReference type="GO" id="GO:0045665">
    <property type="term" value="P:negative regulation of neuron differentiation"/>
    <property type="evidence" value="ECO:0007669"/>
    <property type="project" value="Ensembl"/>
</dbReference>
<dbReference type="GO" id="GO:0048665">
    <property type="term" value="P:neuron fate specification"/>
    <property type="evidence" value="ECO:0007669"/>
    <property type="project" value="Ensembl"/>
</dbReference>
<dbReference type="GO" id="GO:0001764">
    <property type="term" value="P:neuron migration"/>
    <property type="evidence" value="ECO:0007669"/>
    <property type="project" value="Ensembl"/>
</dbReference>
<dbReference type="GO" id="GO:0002087">
    <property type="term" value="P:regulation of respiratory gaseous exchange by nervous system process"/>
    <property type="evidence" value="ECO:0007669"/>
    <property type="project" value="Ensembl"/>
</dbReference>
<dbReference type="GO" id="GO:0006357">
    <property type="term" value="P:regulation of transcription by RNA polymerase II"/>
    <property type="evidence" value="ECO:0000318"/>
    <property type="project" value="GO_Central"/>
</dbReference>
<dbReference type="GO" id="GO:0007585">
    <property type="term" value="P:respiratory gaseous exchange by respiratory system"/>
    <property type="evidence" value="ECO:0007669"/>
    <property type="project" value="Ensembl"/>
</dbReference>
<dbReference type="CDD" id="cd00086">
    <property type="entry name" value="homeodomain"/>
    <property type="match status" value="1"/>
</dbReference>
<dbReference type="FunFam" id="1.10.10.60:FF:000040">
    <property type="entry name" value="T-cell leukemia homeobox protein 3"/>
    <property type="match status" value="1"/>
</dbReference>
<dbReference type="Gene3D" id="1.10.10.60">
    <property type="entry name" value="Homeodomain-like"/>
    <property type="match status" value="1"/>
</dbReference>
<dbReference type="InterPro" id="IPR001356">
    <property type="entry name" value="HD"/>
</dbReference>
<dbReference type="InterPro" id="IPR020479">
    <property type="entry name" value="HD_metazoa"/>
</dbReference>
<dbReference type="InterPro" id="IPR017970">
    <property type="entry name" value="Homeobox_CS"/>
</dbReference>
<dbReference type="InterPro" id="IPR009057">
    <property type="entry name" value="Homeodomain-like_sf"/>
</dbReference>
<dbReference type="InterPro" id="IPR042247">
    <property type="entry name" value="TLX1/2/3"/>
</dbReference>
<dbReference type="PANTHER" id="PTHR45921">
    <property type="entry name" value="IP01054P"/>
    <property type="match status" value="1"/>
</dbReference>
<dbReference type="PANTHER" id="PTHR45921:SF1">
    <property type="entry name" value="T-CELL LEUKEMIA HOMEOBOX PROTEIN 3"/>
    <property type="match status" value="1"/>
</dbReference>
<dbReference type="Pfam" id="PF00046">
    <property type="entry name" value="Homeodomain"/>
    <property type="match status" value="1"/>
</dbReference>
<dbReference type="PRINTS" id="PR00024">
    <property type="entry name" value="HOMEOBOX"/>
</dbReference>
<dbReference type="SMART" id="SM00389">
    <property type="entry name" value="HOX"/>
    <property type="match status" value="1"/>
</dbReference>
<dbReference type="SUPFAM" id="SSF101447">
    <property type="entry name" value="Formin homology 2 domain (FH2 domain)"/>
    <property type="match status" value="1"/>
</dbReference>
<dbReference type="SUPFAM" id="SSF46689">
    <property type="entry name" value="Homeodomain-like"/>
    <property type="match status" value="1"/>
</dbReference>
<dbReference type="PROSITE" id="PS00027">
    <property type="entry name" value="HOMEOBOX_1"/>
    <property type="match status" value="1"/>
</dbReference>
<dbReference type="PROSITE" id="PS50071">
    <property type="entry name" value="HOMEOBOX_2"/>
    <property type="match status" value="1"/>
</dbReference>
<organism>
    <name type="scientific">Gallus gallus</name>
    <name type="common">Chicken</name>
    <dbReference type="NCBI Taxonomy" id="9031"/>
    <lineage>
        <taxon>Eukaryota</taxon>
        <taxon>Metazoa</taxon>
        <taxon>Chordata</taxon>
        <taxon>Craniata</taxon>
        <taxon>Vertebrata</taxon>
        <taxon>Euteleostomi</taxon>
        <taxon>Archelosauria</taxon>
        <taxon>Archosauria</taxon>
        <taxon>Dinosauria</taxon>
        <taxon>Saurischia</taxon>
        <taxon>Theropoda</taxon>
        <taxon>Coelurosauria</taxon>
        <taxon>Aves</taxon>
        <taxon>Neognathae</taxon>
        <taxon>Galloanserae</taxon>
        <taxon>Galliformes</taxon>
        <taxon>Phasianidae</taxon>
        <taxon>Phasianinae</taxon>
        <taxon>Gallus</taxon>
    </lineage>
</organism>